<protein>
    <recommendedName>
        <fullName>Ninja-family protein AFP4</fullName>
    </recommendedName>
    <alternativeName>
        <fullName>ABI five-binding protein 4</fullName>
        <shortName>ABI5-binding protein 4</shortName>
    </alternativeName>
    <alternativeName>
        <fullName>Protein TWO OR MORE ABRES-CONTAINING GENE 2</fullName>
    </alternativeName>
</protein>
<comment type="function">
    <text evidence="2">Acts as a negative regulator of abscisic acid (ABA) and salinity responses.</text>
</comment>
<comment type="subunit">
    <text evidence="3">Interacts with ABI5/DPBF1, AREB3/DPBF3, EEL/DPBF4, ABF1 and ABF3/DPBF5.</text>
</comment>
<comment type="interaction">
    <interactant intactId="EBI-1778843">
        <id>Q9S7Z2</id>
    </interactant>
    <interactant intactId="EBI-4441103">
        <id>Q9ZW21</id>
        <label>At2g29380</label>
    </interactant>
    <organismsDiffer>false</organismsDiffer>
    <experiments>4</experiments>
</comment>
<comment type="interaction">
    <interactant intactId="EBI-1778843">
        <id>Q9S7Z2</id>
    </interactant>
    <interactant intactId="EBI-4426649">
        <id>Q17TI5</id>
        <label>BRX</label>
    </interactant>
    <organismsDiffer>false</organismsDiffer>
    <experiments>3</experiments>
</comment>
<comment type="interaction">
    <interactant intactId="EBI-1778843">
        <id>Q9S7Z2</id>
    </interactant>
    <interactant intactId="EBI-25506855">
        <id>O23160</id>
        <label>MYB73</label>
    </interactant>
    <organismsDiffer>false</organismsDiffer>
    <experiments>3</experiments>
</comment>
<comment type="interaction">
    <interactant intactId="EBI-1778843">
        <id>Q9S7Z2</id>
    </interactant>
    <interactant intactId="EBI-1645478">
        <id>Q38845</id>
        <label>PP2AA1</label>
    </interactant>
    <organismsDiffer>false</organismsDiffer>
    <experiments>3</experiments>
</comment>
<comment type="interaction">
    <interactant intactId="EBI-1778843">
        <id>Q9S7Z2</id>
    </interactant>
    <interactant intactId="EBI-15206004">
        <id>Q8GY55</id>
        <label>TIFY4B</label>
    </interactant>
    <organismsDiffer>false</organismsDiffer>
    <experiments>3</experiments>
</comment>
<comment type="interaction">
    <interactant intactId="EBI-1778843">
        <id>Q9S7Z2</id>
    </interactant>
    <interactant intactId="EBI-15193683">
        <id>Q5CCK4</id>
        <label>VAL2</label>
    </interactant>
    <organismsDiffer>false</organismsDiffer>
    <experiments>3</experiments>
</comment>
<comment type="subcellular location">
    <subcellularLocation>
        <location evidence="2">Nucleus</location>
    </subcellularLocation>
</comment>
<comment type="tissue specificity">
    <text evidence="2">Predominantly expressed in roots and seedlings.</text>
</comment>
<comment type="induction">
    <text evidence="2 3">Up-regulated by abscisic acid (ABA) and salt. Down-regulated by cold and glucose.</text>
</comment>
<comment type="disruption phenotype">
    <text evidence="3">Exhibits insensitivity to abscisic acid (ABA) and salt.</text>
</comment>
<comment type="similarity">
    <text evidence="4">Belongs to the Ninja family.</text>
</comment>
<reference key="1">
    <citation type="journal article" date="2000" name="Nature">
        <title>Sequence and analysis of chromosome 3 of the plant Arabidopsis thaliana.</title>
        <authorList>
            <person name="Salanoubat M."/>
            <person name="Lemcke K."/>
            <person name="Rieger M."/>
            <person name="Ansorge W."/>
            <person name="Unseld M."/>
            <person name="Fartmann B."/>
            <person name="Valle G."/>
            <person name="Bloecker H."/>
            <person name="Perez-Alonso M."/>
            <person name="Obermaier B."/>
            <person name="Delseny M."/>
            <person name="Boutry M."/>
            <person name="Grivell L.A."/>
            <person name="Mache R."/>
            <person name="Puigdomenech P."/>
            <person name="De Simone V."/>
            <person name="Choisne N."/>
            <person name="Artiguenave F."/>
            <person name="Robert C."/>
            <person name="Brottier P."/>
            <person name="Wincker P."/>
            <person name="Cattolico L."/>
            <person name="Weissenbach J."/>
            <person name="Saurin W."/>
            <person name="Quetier F."/>
            <person name="Schaefer M."/>
            <person name="Mueller-Auer S."/>
            <person name="Gabel C."/>
            <person name="Fuchs M."/>
            <person name="Benes V."/>
            <person name="Wurmbach E."/>
            <person name="Drzonek H."/>
            <person name="Erfle H."/>
            <person name="Jordan N."/>
            <person name="Bangert S."/>
            <person name="Wiedelmann R."/>
            <person name="Kranz H."/>
            <person name="Voss H."/>
            <person name="Holland R."/>
            <person name="Brandt P."/>
            <person name="Nyakatura G."/>
            <person name="Vezzi A."/>
            <person name="D'Angelo M."/>
            <person name="Pallavicini A."/>
            <person name="Toppo S."/>
            <person name="Simionati B."/>
            <person name="Conrad A."/>
            <person name="Hornischer K."/>
            <person name="Kauer G."/>
            <person name="Loehnert T.-H."/>
            <person name="Nordsiek G."/>
            <person name="Reichelt J."/>
            <person name="Scharfe M."/>
            <person name="Schoen O."/>
            <person name="Bargues M."/>
            <person name="Terol J."/>
            <person name="Climent J."/>
            <person name="Navarro P."/>
            <person name="Collado C."/>
            <person name="Perez-Perez A."/>
            <person name="Ottenwaelder B."/>
            <person name="Duchemin D."/>
            <person name="Cooke R."/>
            <person name="Laudie M."/>
            <person name="Berger-Llauro C."/>
            <person name="Purnelle B."/>
            <person name="Masuy D."/>
            <person name="de Haan M."/>
            <person name="Maarse A.C."/>
            <person name="Alcaraz J.-P."/>
            <person name="Cottet A."/>
            <person name="Casacuberta E."/>
            <person name="Monfort A."/>
            <person name="Argiriou A."/>
            <person name="Flores M."/>
            <person name="Liguori R."/>
            <person name="Vitale D."/>
            <person name="Mannhaupt G."/>
            <person name="Haase D."/>
            <person name="Schoof H."/>
            <person name="Rudd S."/>
            <person name="Zaccaria P."/>
            <person name="Mewes H.-W."/>
            <person name="Mayer K.F.X."/>
            <person name="Kaul S."/>
            <person name="Town C.D."/>
            <person name="Koo H.L."/>
            <person name="Tallon L.J."/>
            <person name="Jenkins J."/>
            <person name="Rooney T."/>
            <person name="Rizzo M."/>
            <person name="Walts A."/>
            <person name="Utterback T."/>
            <person name="Fujii C.Y."/>
            <person name="Shea T.P."/>
            <person name="Creasy T.H."/>
            <person name="Haas B."/>
            <person name="Maiti R."/>
            <person name="Wu D."/>
            <person name="Peterson J."/>
            <person name="Van Aken S."/>
            <person name="Pai G."/>
            <person name="Militscher J."/>
            <person name="Sellers P."/>
            <person name="Gill J.E."/>
            <person name="Feldblyum T.V."/>
            <person name="Preuss D."/>
            <person name="Lin X."/>
            <person name="Nierman W.C."/>
            <person name="Salzberg S.L."/>
            <person name="White O."/>
            <person name="Venter J.C."/>
            <person name="Fraser C.M."/>
            <person name="Kaneko T."/>
            <person name="Nakamura Y."/>
            <person name="Sato S."/>
            <person name="Kato T."/>
            <person name="Asamizu E."/>
            <person name="Sasamoto S."/>
            <person name="Kimura T."/>
            <person name="Idesawa K."/>
            <person name="Kawashima K."/>
            <person name="Kishida Y."/>
            <person name="Kiyokawa C."/>
            <person name="Kohara M."/>
            <person name="Matsumoto M."/>
            <person name="Matsuno A."/>
            <person name="Muraki A."/>
            <person name="Nakayama S."/>
            <person name="Nakazaki N."/>
            <person name="Shinpo S."/>
            <person name="Takeuchi C."/>
            <person name="Wada T."/>
            <person name="Watanabe A."/>
            <person name="Yamada M."/>
            <person name="Yasuda M."/>
            <person name="Tabata S."/>
        </authorList>
    </citation>
    <scope>NUCLEOTIDE SEQUENCE [LARGE SCALE GENOMIC DNA]</scope>
    <source>
        <strain>cv. Columbia</strain>
    </source>
</reference>
<reference key="2">
    <citation type="journal article" date="2017" name="Plant J.">
        <title>Araport11: a complete reannotation of the Arabidopsis thaliana reference genome.</title>
        <authorList>
            <person name="Cheng C.Y."/>
            <person name="Krishnakumar V."/>
            <person name="Chan A.P."/>
            <person name="Thibaud-Nissen F."/>
            <person name="Schobel S."/>
            <person name="Town C.D."/>
        </authorList>
    </citation>
    <scope>GENOME REANNOTATION</scope>
    <source>
        <strain>cv. Columbia</strain>
    </source>
</reference>
<reference key="3">
    <citation type="journal article" date="2003" name="Science">
        <title>Empirical analysis of transcriptional activity in the Arabidopsis genome.</title>
        <authorList>
            <person name="Yamada K."/>
            <person name="Lim J."/>
            <person name="Dale J.M."/>
            <person name="Chen H."/>
            <person name="Shinn P."/>
            <person name="Palm C.J."/>
            <person name="Southwick A.M."/>
            <person name="Wu H.C."/>
            <person name="Kim C.J."/>
            <person name="Nguyen M."/>
            <person name="Pham P.K."/>
            <person name="Cheuk R.F."/>
            <person name="Karlin-Newmann G."/>
            <person name="Liu S.X."/>
            <person name="Lam B."/>
            <person name="Sakano H."/>
            <person name="Wu T."/>
            <person name="Yu G."/>
            <person name="Miranda M."/>
            <person name="Quach H.L."/>
            <person name="Tripp M."/>
            <person name="Chang C.H."/>
            <person name="Lee J.M."/>
            <person name="Toriumi M.J."/>
            <person name="Chan M.M."/>
            <person name="Tang C.C."/>
            <person name="Onodera C.S."/>
            <person name="Deng J.M."/>
            <person name="Akiyama K."/>
            <person name="Ansari Y."/>
            <person name="Arakawa T."/>
            <person name="Banh J."/>
            <person name="Banno F."/>
            <person name="Bowser L."/>
            <person name="Brooks S.Y."/>
            <person name="Carninci P."/>
            <person name="Chao Q."/>
            <person name="Choy N."/>
            <person name="Enju A."/>
            <person name="Goldsmith A.D."/>
            <person name="Gurjal M."/>
            <person name="Hansen N.F."/>
            <person name="Hayashizaki Y."/>
            <person name="Johnson-Hopson C."/>
            <person name="Hsuan V.W."/>
            <person name="Iida K."/>
            <person name="Karnes M."/>
            <person name="Khan S."/>
            <person name="Koesema E."/>
            <person name="Ishida J."/>
            <person name="Jiang P.X."/>
            <person name="Jones T."/>
            <person name="Kawai J."/>
            <person name="Kamiya A."/>
            <person name="Meyers C."/>
            <person name="Nakajima M."/>
            <person name="Narusaka M."/>
            <person name="Seki M."/>
            <person name="Sakurai T."/>
            <person name="Satou M."/>
            <person name="Tamse R."/>
            <person name="Vaysberg M."/>
            <person name="Wallender E.K."/>
            <person name="Wong C."/>
            <person name="Yamamura Y."/>
            <person name="Yuan S."/>
            <person name="Shinozaki K."/>
            <person name="Davis R.W."/>
            <person name="Theologis A."/>
            <person name="Ecker J.R."/>
        </authorList>
    </citation>
    <scope>NUCLEOTIDE SEQUENCE [LARGE SCALE MRNA]</scope>
    <source>
        <strain>cv. Columbia</strain>
    </source>
</reference>
<reference key="4">
    <citation type="journal article" date="2007" name="Plant Mol. Biol.">
        <title>Overexpression of TMAC2, a novel negative regulator of abscisic acid and salinity responses, has pleiotropic effects in Arabidopsis thaliana.</title>
        <authorList>
            <person name="Huang M.-D."/>
            <person name="Wu W.-L."/>
        </authorList>
    </citation>
    <scope>FUNCTION</scope>
    <scope>SUBCELLULAR LOCATION</scope>
    <scope>TISSUE SPECIFICITY</scope>
    <scope>INDUCTION</scope>
</reference>
<reference key="5">
    <citation type="journal article" date="2008" name="Plant Mol. Biol.">
        <title>A small plant-specific protein family of ABI five binding proteins (AFPs) regulates stress response in germinating Arabidopsis seeds and seedlings.</title>
        <authorList>
            <person name="Garcia M.E."/>
            <person name="Lynch T.J."/>
            <person name="Peeters J."/>
            <person name="Snowden C."/>
            <person name="Finkelstein R.R."/>
        </authorList>
    </citation>
    <scope>GENE FAMILY</scope>
    <scope>NOMENCLATURE</scope>
    <scope>SUBUNIT</scope>
    <scope>INTERACTION WITH ABI5/DPBF1; AREB3/DPBF3; EEL/DPBF4; ABF1 AND ABF3/DPBF5</scope>
    <scope>INDUCTION</scope>
    <scope>DISRUPTION PHENOTYPE</scope>
</reference>
<organism>
    <name type="scientific">Arabidopsis thaliana</name>
    <name type="common">Mouse-ear cress</name>
    <dbReference type="NCBI Taxonomy" id="3702"/>
    <lineage>
        <taxon>Eukaryota</taxon>
        <taxon>Viridiplantae</taxon>
        <taxon>Streptophyta</taxon>
        <taxon>Embryophyta</taxon>
        <taxon>Tracheophyta</taxon>
        <taxon>Spermatophyta</taxon>
        <taxon>Magnoliopsida</taxon>
        <taxon>eudicotyledons</taxon>
        <taxon>Gunneridae</taxon>
        <taxon>Pentapetalae</taxon>
        <taxon>rosids</taxon>
        <taxon>malvids</taxon>
        <taxon>Brassicales</taxon>
        <taxon>Brassicaceae</taxon>
        <taxon>Camelineae</taxon>
        <taxon>Arabidopsis</taxon>
    </lineage>
</organism>
<gene>
    <name type="primary">AFP4</name>
    <name type="synonym">TMAC2</name>
    <name type="ordered locus">At3g02140</name>
    <name type="ORF">F14P3.21</name>
    <name type="ORF">F1C9.7</name>
</gene>
<dbReference type="EMBL" id="AC009755">
    <property type="protein sequence ID" value="AAF02123.1"/>
    <property type="molecule type" value="Genomic_DNA"/>
</dbReference>
<dbReference type="EMBL" id="AC011664">
    <property type="protein sequence ID" value="AAF14824.1"/>
    <property type="molecule type" value="Genomic_DNA"/>
</dbReference>
<dbReference type="EMBL" id="CP002686">
    <property type="protein sequence ID" value="AEE73768.1"/>
    <property type="molecule type" value="Genomic_DNA"/>
</dbReference>
<dbReference type="EMBL" id="AY034949">
    <property type="protein sequence ID" value="AAK59455.1"/>
    <property type="molecule type" value="mRNA"/>
</dbReference>
<dbReference type="EMBL" id="AY062992">
    <property type="protein sequence ID" value="AAL34166.1"/>
    <property type="molecule type" value="mRNA"/>
</dbReference>
<dbReference type="RefSeq" id="NP_566163.1">
    <property type="nucleotide sequence ID" value="NM_111081.3"/>
</dbReference>
<dbReference type="BioGRID" id="6515">
    <property type="interactions" value="14"/>
</dbReference>
<dbReference type="FunCoup" id="Q9S7Z2">
    <property type="interactions" value="5"/>
</dbReference>
<dbReference type="IntAct" id="Q9S7Z2">
    <property type="interactions" value="15"/>
</dbReference>
<dbReference type="STRING" id="3702.Q9S7Z2"/>
<dbReference type="iPTMnet" id="Q9S7Z2"/>
<dbReference type="PaxDb" id="3702-AT3G02140.1"/>
<dbReference type="ProteomicsDB" id="244768"/>
<dbReference type="EnsemblPlants" id="AT3G02140.1">
    <property type="protein sequence ID" value="AT3G02140.1"/>
    <property type="gene ID" value="AT3G02140"/>
</dbReference>
<dbReference type="GeneID" id="821182"/>
<dbReference type="Gramene" id="AT3G02140.1">
    <property type="protein sequence ID" value="AT3G02140.1"/>
    <property type="gene ID" value="AT3G02140"/>
</dbReference>
<dbReference type="KEGG" id="ath:AT3G02140"/>
<dbReference type="Araport" id="AT3G02140"/>
<dbReference type="TAIR" id="AT3G02140">
    <property type="gene designation" value="TMAC2"/>
</dbReference>
<dbReference type="eggNOG" id="ENOG502QW6K">
    <property type="taxonomic scope" value="Eukaryota"/>
</dbReference>
<dbReference type="HOGENOM" id="CLU_034695_0_0_1"/>
<dbReference type="InParanoid" id="Q9S7Z2"/>
<dbReference type="OMA" id="DKNRGQA"/>
<dbReference type="PhylomeDB" id="Q9S7Z2"/>
<dbReference type="PRO" id="PR:Q9S7Z2"/>
<dbReference type="Proteomes" id="UP000006548">
    <property type="component" value="Chromosome 3"/>
</dbReference>
<dbReference type="ExpressionAtlas" id="Q9S7Z2">
    <property type="expression patterns" value="baseline and differential"/>
</dbReference>
<dbReference type="GO" id="GO:0005634">
    <property type="term" value="C:nucleus"/>
    <property type="evidence" value="ECO:0000314"/>
    <property type="project" value="TAIR"/>
</dbReference>
<dbReference type="GO" id="GO:0009788">
    <property type="term" value="P:negative regulation of abscisic acid-activated signaling pathway"/>
    <property type="evidence" value="ECO:0000315"/>
    <property type="project" value="TAIR"/>
</dbReference>
<dbReference type="GO" id="GO:0010581">
    <property type="term" value="P:regulation of starch biosynthetic process"/>
    <property type="evidence" value="ECO:0000315"/>
    <property type="project" value="TAIR"/>
</dbReference>
<dbReference type="GO" id="GO:0009737">
    <property type="term" value="P:response to abscisic acid"/>
    <property type="evidence" value="ECO:0000270"/>
    <property type="project" value="TAIR"/>
</dbReference>
<dbReference type="GO" id="GO:0009651">
    <property type="term" value="P:response to salt stress"/>
    <property type="evidence" value="ECO:0000270"/>
    <property type="project" value="TAIR"/>
</dbReference>
<dbReference type="GO" id="GO:0007165">
    <property type="term" value="P:signal transduction"/>
    <property type="evidence" value="ECO:0007669"/>
    <property type="project" value="InterPro"/>
</dbReference>
<dbReference type="InterPro" id="IPR031307">
    <property type="entry name" value="Ninja_fam"/>
</dbReference>
<dbReference type="InterPro" id="IPR012463">
    <property type="entry name" value="Ninja_motif"/>
</dbReference>
<dbReference type="InterPro" id="IPR032308">
    <property type="entry name" value="TDBD"/>
</dbReference>
<dbReference type="PANTHER" id="PTHR31413">
    <property type="entry name" value="AFP HOMOLOG 2"/>
    <property type="match status" value="1"/>
</dbReference>
<dbReference type="PANTHER" id="PTHR31413:SF13">
    <property type="entry name" value="NINJA-FAMILY PROTEIN AFP4"/>
    <property type="match status" value="1"/>
</dbReference>
<dbReference type="Pfam" id="PF07897">
    <property type="entry name" value="EAR"/>
    <property type="match status" value="1"/>
</dbReference>
<dbReference type="Pfam" id="PF16135">
    <property type="entry name" value="TDBD"/>
    <property type="match status" value="1"/>
</dbReference>
<keyword id="KW-0539">Nucleus</keyword>
<keyword id="KW-1185">Reference proteome</keyword>
<evidence type="ECO:0000256" key="1">
    <source>
        <dbReference type="SAM" id="MobiDB-lite"/>
    </source>
</evidence>
<evidence type="ECO:0000269" key="2">
    <source>
    </source>
</evidence>
<evidence type="ECO:0000269" key="3">
    <source>
    </source>
</evidence>
<evidence type="ECO:0000305" key="4"/>
<feature type="chain" id="PRO_0000369617" description="Ninja-family protein AFP4">
    <location>
        <begin position="1"/>
        <end position="319"/>
    </location>
</feature>
<feature type="region of interest" description="Disordered" evidence="1">
    <location>
        <begin position="39"/>
        <end position="63"/>
    </location>
</feature>
<feature type="region of interest" description="Disordered" evidence="1">
    <location>
        <begin position="99"/>
        <end position="120"/>
    </location>
</feature>
<feature type="region of interest" description="Disordered" evidence="1">
    <location>
        <begin position="205"/>
        <end position="228"/>
    </location>
</feature>
<feature type="compositionally biased region" description="Basic and acidic residues" evidence="1">
    <location>
        <begin position="39"/>
        <end position="54"/>
    </location>
</feature>
<sequence>MEMIRGRGIPNGVVQVPNLSANNLLQKFFIASNHFCQRDSEHGENQQEAKKREDEAEEDEKDVELTLGLSLNGQFGTDPRSRKRRHFELGRSSSIPEGFVFDEQRSGGGNGGDMRRIVGRGGSDMFQLDRTRSLPVVTEMDIEKERKVSEKTRAFMESPVTNRGAYLTKDKNRGQAVETEKPRAFLEFKIPPTKEGKKEKDRLVVTGPVNGKGKNGNTAKKQKNNVENSGMEKARNILEDMPCVSTRDVGADGKRVEGFLYWYGGNKEEVKIVCVCHGSFLSPAEFVRHGGGTVSDDDGGDVMINPLRHIVVKLPSSSI</sequence>
<proteinExistence type="evidence at protein level"/>
<accession>Q9S7Z2</accession>
<name>AFP4_ARATH</name>